<protein>
    <recommendedName>
        <fullName>Uncharacterized protein C11E3.02c</fullName>
    </recommendedName>
</protein>
<sequence length="1237" mass="142991">MNCRRKPLPLHSNEVQAAESISKDELYSWTLKNVLILFLVQYRASTPSALQTSSFSTPVEKKTNGAFSGSLFSAKEKKDNPKYPKDFIKYLSLALESISMGKEPEYQDQLIRGCFAAFYNNINKSHISKQLKDSRKIEDMFLIFASSVSSELTKRLGTAYDSNLADRITASFIELCKRVTLKGQLASPSSEFVSHLDMYHSKLLNKSEILSTKRVNRGQDQFDLSSFPLLKVFSSVFKVAYSKALLDAEKLFPSIDEAAIAEDIGILIEDLESDACKFSHSVVDFSNYKSYSTWKARELQTLEQHRKIMLSLIPLSSSPNHPIQPIGFPASRKTPTYVPPIARPYFRQLLSLCLEYRLQVTDPVEVKQINTFIRECSIYWRILPSTRCALSMDFAREHLQKGLITSADVLTHFGELHKSLKEWEITYWPKIDVSIFSSALFGIRNALAQLLKKSLLDLLHEKKADFHRWLNIMSICVEDGKVINQDLSPKSEISSVALALQEHCKVIFDEEFDLSKLPSSNFLDEIILASNRISVRIKFLERNCSECIYGVLSLPQIFINIVLPNYIRAALVVAKEYLREKANADINDLTKDMLEIYSDLKQMIHVLQEYHNEEYRIGSFEGFFQPFIDSWLDNVEASAEQWFLRSLEKDNFDENSSEGQYSSSIVDLFHAFHQAFRTLEGFEWEDDLANARFFTRFFRVIYIVLSKYTQWTTQKFFEEANKQDDTSEVQNDNSSSWFSKARNILSGSNEVLPFRFSPTMCILLNNIHFAMHAYEELEQKIDLQRLIEALDVAESTKRHKISATNYLYTIKVVRGEGLHPDGAGKIRTSYIVLTDNKGRRIGKTRPIHSMNPRWDDTFEVKTKDALMITANLWSKGKFNDHEIFGRSSFTLSPKIYGDYLPREEWFDLNPHGELLLRIEMEGEREHIGFYVGRTYHDLERAQREMIKFIVNKMEPVINQNLSTATLKKLLSANTWMDLDKTMTSVTSLLNRTGFSSKSSENVKKEGELTDVQIEAAIYELLDYFDLNFSIIAKHLTKDVFVTVMSYVWDEVVCTTEELLLPPVSVKPINRKPLSPAQMAIVYRWLQFLKDYFYANGEGVKLPVLETDHYKELLRVQEYYDKPTDFLLQECDKIASQLYLSSRMVNNEPVESLPRHSRIKFANKEIYRSGTIRKVHIQTNESELERNERIILRILRMRADSKRFLSKHFQRKGRLLMADAMRNGYVMPLGHLKKLDSR</sequence>
<dbReference type="EMBL" id="CU329670">
    <property type="protein sequence ID" value="CAB11181.1"/>
    <property type="molecule type" value="Genomic_DNA"/>
</dbReference>
<dbReference type="PIR" id="T37529">
    <property type="entry name" value="T37529"/>
</dbReference>
<dbReference type="SMR" id="O13683"/>
<dbReference type="BioGRID" id="279408">
    <property type="interactions" value="19"/>
</dbReference>
<dbReference type="FunCoup" id="O13683">
    <property type="interactions" value="28"/>
</dbReference>
<dbReference type="STRING" id="284812.O13683"/>
<dbReference type="iPTMnet" id="O13683"/>
<dbReference type="PaxDb" id="4896-SPAC11E3.02c.1"/>
<dbReference type="EnsemblFungi" id="SPAC11E3.02c.1">
    <property type="protein sequence ID" value="SPAC11E3.02c.1:pep"/>
    <property type="gene ID" value="SPAC11E3.02c"/>
</dbReference>
<dbReference type="KEGG" id="spo:2542968"/>
<dbReference type="PomBase" id="SPAC11E3.02c"/>
<dbReference type="VEuPathDB" id="FungiDB:SPAC11E3.02c"/>
<dbReference type="eggNOG" id="ENOG502QQWJ">
    <property type="taxonomic scope" value="Eukaryota"/>
</dbReference>
<dbReference type="HOGENOM" id="CLU_003023_0_0_1"/>
<dbReference type="InParanoid" id="O13683"/>
<dbReference type="OMA" id="VLKSPKW"/>
<dbReference type="PhylomeDB" id="O13683"/>
<dbReference type="PRO" id="PR:O13683"/>
<dbReference type="Proteomes" id="UP000002485">
    <property type="component" value="Chromosome I"/>
</dbReference>
<dbReference type="GO" id="GO:0032153">
    <property type="term" value="C:cell division site"/>
    <property type="evidence" value="ECO:0000269"/>
    <property type="project" value="PomBase"/>
</dbReference>
<dbReference type="GO" id="GO:0051286">
    <property type="term" value="C:cell tip"/>
    <property type="evidence" value="ECO:0000269"/>
    <property type="project" value="PomBase"/>
</dbReference>
<dbReference type="GO" id="GO:0090689">
    <property type="term" value="C:cleavage furrow leading edge"/>
    <property type="evidence" value="ECO:0000269"/>
    <property type="project" value="PomBase"/>
</dbReference>
<dbReference type="GO" id="GO:0005829">
    <property type="term" value="C:cytosol"/>
    <property type="evidence" value="ECO:0007005"/>
    <property type="project" value="PomBase"/>
</dbReference>
<dbReference type="GO" id="GO:0005546">
    <property type="term" value="F:phosphatidylinositol-4,5-bisphosphate binding"/>
    <property type="evidence" value="ECO:0000314"/>
    <property type="project" value="PomBase"/>
</dbReference>
<dbReference type="GO" id="GO:0001786">
    <property type="term" value="F:phosphatidylserine binding"/>
    <property type="evidence" value="ECO:0000314"/>
    <property type="project" value="PomBase"/>
</dbReference>
<dbReference type="GO" id="GO:0120207">
    <property type="term" value="P:endocytosis, site selection"/>
    <property type="evidence" value="ECO:0000315"/>
    <property type="project" value="PomBase"/>
</dbReference>
<dbReference type="GO" id="GO:0006887">
    <property type="term" value="P:exocytosis"/>
    <property type="evidence" value="ECO:0000250"/>
    <property type="project" value="PomBase"/>
</dbReference>
<dbReference type="CDD" id="cd04043">
    <property type="entry name" value="C2_Munc13_fungal"/>
    <property type="match status" value="1"/>
</dbReference>
<dbReference type="Gene3D" id="1.10.357.50">
    <property type="match status" value="1"/>
</dbReference>
<dbReference type="Gene3D" id="1.20.58.1100">
    <property type="match status" value="1"/>
</dbReference>
<dbReference type="Gene3D" id="2.60.40.150">
    <property type="entry name" value="C2 domain"/>
    <property type="match status" value="1"/>
</dbReference>
<dbReference type="InterPro" id="IPR000008">
    <property type="entry name" value="C2_dom"/>
</dbReference>
<dbReference type="InterPro" id="IPR035892">
    <property type="entry name" value="C2_domain_sf"/>
</dbReference>
<dbReference type="InterPro" id="IPR052811">
    <property type="entry name" value="Glucose_resp_signaling"/>
</dbReference>
<dbReference type="InterPro" id="IPR010439">
    <property type="entry name" value="MUN_dom"/>
</dbReference>
<dbReference type="InterPro" id="IPR014770">
    <property type="entry name" value="Munc13_1"/>
</dbReference>
<dbReference type="InterPro" id="IPR014772">
    <property type="entry name" value="Munc13_dom-2"/>
</dbReference>
<dbReference type="PANTHER" id="PTHR47263">
    <property type="entry name" value="ADENYLATE CYCLASE ACTIVATION PROTEIN GIT1"/>
    <property type="match status" value="1"/>
</dbReference>
<dbReference type="PANTHER" id="PTHR47263:SF1">
    <property type="entry name" value="C2 DOMAIN PROTEIN (AFU_ORTHOLOGUE AFUA_7G02350)"/>
    <property type="match status" value="1"/>
</dbReference>
<dbReference type="Pfam" id="PF00168">
    <property type="entry name" value="C2"/>
    <property type="match status" value="1"/>
</dbReference>
<dbReference type="Pfam" id="PF06292">
    <property type="entry name" value="MUN"/>
    <property type="match status" value="2"/>
</dbReference>
<dbReference type="SMART" id="SM00239">
    <property type="entry name" value="C2"/>
    <property type="match status" value="1"/>
</dbReference>
<dbReference type="SUPFAM" id="SSF49562">
    <property type="entry name" value="C2 domain (Calcium/lipid-binding domain, CaLB)"/>
    <property type="match status" value="1"/>
</dbReference>
<dbReference type="PROSITE" id="PS50004">
    <property type="entry name" value="C2"/>
    <property type="match status" value="1"/>
</dbReference>
<dbReference type="PROSITE" id="PS51258">
    <property type="entry name" value="MHD1"/>
    <property type="match status" value="1"/>
</dbReference>
<dbReference type="PROSITE" id="PS51259">
    <property type="entry name" value="MHD2"/>
    <property type="match status" value="1"/>
</dbReference>
<organism>
    <name type="scientific">Schizosaccharomyces pombe (strain 972 / ATCC 24843)</name>
    <name type="common">Fission yeast</name>
    <dbReference type="NCBI Taxonomy" id="284812"/>
    <lineage>
        <taxon>Eukaryota</taxon>
        <taxon>Fungi</taxon>
        <taxon>Dikarya</taxon>
        <taxon>Ascomycota</taxon>
        <taxon>Taphrinomycotina</taxon>
        <taxon>Schizosaccharomycetes</taxon>
        <taxon>Schizosaccharomycetales</taxon>
        <taxon>Schizosaccharomycetaceae</taxon>
        <taxon>Schizosaccharomyces</taxon>
    </lineage>
</organism>
<reference key="1">
    <citation type="journal article" date="2002" name="Nature">
        <title>The genome sequence of Schizosaccharomyces pombe.</title>
        <authorList>
            <person name="Wood V."/>
            <person name="Gwilliam R."/>
            <person name="Rajandream M.A."/>
            <person name="Lyne M.H."/>
            <person name="Lyne R."/>
            <person name="Stewart A."/>
            <person name="Sgouros J.G."/>
            <person name="Peat N."/>
            <person name="Hayles J."/>
            <person name="Baker S.G."/>
            <person name="Basham D."/>
            <person name="Bowman S."/>
            <person name="Brooks K."/>
            <person name="Brown D."/>
            <person name="Brown S."/>
            <person name="Chillingworth T."/>
            <person name="Churcher C.M."/>
            <person name="Collins M."/>
            <person name="Connor R."/>
            <person name="Cronin A."/>
            <person name="Davis P."/>
            <person name="Feltwell T."/>
            <person name="Fraser A."/>
            <person name="Gentles S."/>
            <person name="Goble A."/>
            <person name="Hamlin N."/>
            <person name="Harris D.E."/>
            <person name="Hidalgo J."/>
            <person name="Hodgson G."/>
            <person name="Holroyd S."/>
            <person name="Hornsby T."/>
            <person name="Howarth S."/>
            <person name="Huckle E.J."/>
            <person name="Hunt S."/>
            <person name="Jagels K."/>
            <person name="James K.D."/>
            <person name="Jones L."/>
            <person name="Jones M."/>
            <person name="Leather S."/>
            <person name="McDonald S."/>
            <person name="McLean J."/>
            <person name="Mooney P."/>
            <person name="Moule S."/>
            <person name="Mungall K.L."/>
            <person name="Murphy L.D."/>
            <person name="Niblett D."/>
            <person name="Odell C."/>
            <person name="Oliver K."/>
            <person name="O'Neil S."/>
            <person name="Pearson D."/>
            <person name="Quail M.A."/>
            <person name="Rabbinowitsch E."/>
            <person name="Rutherford K.M."/>
            <person name="Rutter S."/>
            <person name="Saunders D."/>
            <person name="Seeger K."/>
            <person name="Sharp S."/>
            <person name="Skelton J."/>
            <person name="Simmonds M.N."/>
            <person name="Squares R."/>
            <person name="Squares S."/>
            <person name="Stevens K."/>
            <person name="Taylor K."/>
            <person name="Taylor R.G."/>
            <person name="Tivey A."/>
            <person name="Walsh S.V."/>
            <person name="Warren T."/>
            <person name="Whitehead S."/>
            <person name="Woodward J.R."/>
            <person name="Volckaert G."/>
            <person name="Aert R."/>
            <person name="Robben J."/>
            <person name="Grymonprez B."/>
            <person name="Weltjens I."/>
            <person name="Vanstreels E."/>
            <person name="Rieger M."/>
            <person name="Schaefer M."/>
            <person name="Mueller-Auer S."/>
            <person name="Gabel C."/>
            <person name="Fuchs M."/>
            <person name="Duesterhoeft A."/>
            <person name="Fritzc C."/>
            <person name="Holzer E."/>
            <person name="Moestl D."/>
            <person name="Hilbert H."/>
            <person name="Borzym K."/>
            <person name="Langer I."/>
            <person name="Beck A."/>
            <person name="Lehrach H."/>
            <person name="Reinhardt R."/>
            <person name="Pohl T.M."/>
            <person name="Eger P."/>
            <person name="Zimmermann W."/>
            <person name="Wedler H."/>
            <person name="Wambutt R."/>
            <person name="Purnelle B."/>
            <person name="Goffeau A."/>
            <person name="Cadieu E."/>
            <person name="Dreano S."/>
            <person name="Gloux S."/>
            <person name="Lelaure V."/>
            <person name="Mottier S."/>
            <person name="Galibert F."/>
            <person name="Aves S.J."/>
            <person name="Xiang Z."/>
            <person name="Hunt C."/>
            <person name="Moore K."/>
            <person name="Hurst S.M."/>
            <person name="Lucas M."/>
            <person name="Rochet M."/>
            <person name="Gaillardin C."/>
            <person name="Tallada V.A."/>
            <person name="Garzon A."/>
            <person name="Thode G."/>
            <person name="Daga R.R."/>
            <person name="Cruzado L."/>
            <person name="Jimenez J."/>
            <person name="Sanchez M."/>
            <person name="del Rey F."/>
            <person name="Benito J."/>
            <person name="Dominguez A."/>
            <person name="Revuelta J.L."/>
            <person name="Moreno S."/>
            <person name="Armstrong J."/>
            <person name="Forsburg S.L."/>
            <person name="Cerutti L."/>
            <person name="Lowe T."/>
            <person name="McCombie W.R."/>
            <person name="Paulsen I."/>
            <person name="Potashkin J."/>
            <person name="Shpakovski G.V."/>
            <person name="Ussery D."/>
            <person name="Barrell B.G."/>
            <person name="Nurse P."/>
        </authorList>
    </citation>
    <scope>NUCLEOTIDE SEQUENCE [LARGE SCALE GENOMIC DNA]</scope>
    <source>
        <strain>972 / ATCC 24843</strain>
    </source>
</reference>
<accession>O13683</accession>
<gene>
    <name type="ORF">SPAC11E3.02c</name>
</gene>
<proteinExistence type="predicted"/>
<evidence type="ECO:0000255" key="1">
    <source>
        <dbReference type="PROSITE-ProRule" id="PRU00041"/>
    </source>
</evidence>
<evidence type="ECO:0000255" key="2">
    <source>
        <dbReference type="PROSITE-ProRule" id="PRU00587"/>
    </source>
</evidence>
<evidence type="ECO:0000255" key="3">
    <source>
        <dbReference type="PROSITE-ProRule" id="PRU00588"/>
    </source>
</evidence>
<name>YDY2_SCHPO</name>
<keyword id="KW-1185">Reference proteome</keyword>
<feature type="chain" id="PRO_0000116677" description="Uncharacterized protein C11E3.02c">
    <location>
        <begin position="1"/>
        <end position="1237"/>
    </location>
</feature>
<feature type="domain" description="MHD1" evidence="2">
    <location>
        <begin position="591"/>
        <end position="712"/>
    </location>
</feature>
<feature type="domain" description="C2" evidence="1">
    <location>
        <begin position="786"/>
        <end position="906"/>
    </location>
</feature>
<feature type="domain" description="MHD2" evidence="3">
    <location>
        <begin position="1014"/>
        <end position="1130"/>
    </location>
</feature>